<proteinExistence type="inferred from homology"/>
<dbReference type="EC" id="4.2.3.4" evidence="1"/>
<dbReference type="EMBL" id="AE017223">
    <property type="protein sequence ID" value="AAX75305.1"/>
    <property type="molecule type" value="Genomic_DNA"/>
</dbReference>
<dbReference type="RefSeq" id="WP_002967019.1">
    <property type="nucleotide sequence ID" value="NC_006932.1"/>
</dbReference>
<dbReference type="SMR" id="Q57AM9"/>
<dbReference type="EnsemblBacteria" id="AAX75305">
    <property type="protein sequence ID" value="AAX75305"/>
    <property type="gene ID" value="BruAb1_2003"/>
</dbReference>
<dbReference type="GeneID" id="93017659"/>
<dbReference type="KEGG" id="bmb:BruAb1_2003"/>
<dbReference type="HOGENOM" id="CLU_001201_0_2_5"/>
<dbReference type="UniPathway" id="UPA00053">
    <property type="reaction ID" value="UER00085"/>
</dbReference>
<dbReference type="Proteomes" id="UP000000540">
    <property type="component" value="Chromosome I"/>
</dbReference>
<dbReference type="GO" id="GO:0005737">
    <property type="term" value="C:cytoplasm"/>
    <property type="evidence" value="ECO:0007669"/>
    <property type="project" value="UniProtKB-SubCell"/>
</dbReference>
<dbReference type="GO" id="GO:0003856">
    <property type="term" value="F:3-dehydroquinate synthase activity"/>
    <property type="evidence" value="ECO:0007669"/>
    <property type="project" value="UniProtKB-UniRule"/>
</dbReference>
<dbReference type="GO" id="GO:0046872">
    <property type="term" value="F:metal ion binding"/>
    <property type="evidence" value="ECO:0007669"/>
    <property type="project" value="UniProtKB-KW"/>
</dbReference>
<dbReference type="GO" id="GO:0000166">
    <property type="term" value="F:nucleotide binding"/>
    <property type="evidence" value="ECO:0007669"/>
    <property type="project" value="UniProtKB-KW"/>
</dbReference>
<dbReference type="GO" id="GO:0008652">
    <property type="term" value="P:amino acid biosynthetic process"/>
    <property type="evidence" value="ECO:0007669"/>
    <property type="project" value="UniProtKB-KW"/>
</dbReference>
<dbReference type="GO" id="GO:0009073">
    <property type="term" value="P:aromatic amino acid family biosynthetic process"/>
    <property type="evidence" value="ECO:0007669"/>
    <property type="project" value="UniProtKB-KW"/>
</dbReference>
<dbReference type="GO" id="GO:0009423">
    <property type="term" value="P:chorismate biosynthetic process"/>
    <property type="evidence" value="ECO:0007669"/>
    <property type="project" value="UniProtKB-UniRule"/>
</dbReference>
<dbReference type="CDD" id="cd08195">
    <property type="entry name" value="DHQS"/>
    <property type="match status" value="1"/>
</dbReference>
<dbReference type="FunFam" id="3.40.50.1970:FF:000007">
    <property type="entry name" value="Pentafunctional AROM polypeptide"/>
    <property type="match status" value="1"/>
</dbReference>
<dbReference type="Gene3D" id="3.40.50.1970">
    <property type="match status" value="1"/>
</dbReference>
<dbReference type="Gene3D" id="1.20.1090.10">
    <property type="entry name" value="Dehydroquinate synthase-like - alpha domain"/>
    <property type="match status" value="1"/>
</dbReference>
<dbReference type="HAMAP" id="MF_00110">
    <property type="entry name" value="DHQ_synthase"/>
    <property type="match status" value="1"/>
</dbReference>
<dbReference type="InterPro" id="IPR050071">
    <property type="entry name" value="Dehydroquinate_synthase"/>
</dbReference>
<dbReference type="InterPro" id="IPR016037">
    <property type="entry name" value="DHQ_synth_AroB"/>
</dbReference>
<dbReference type="InterPro" id="IPR030963">
    <property type="entry name" value="DHQ_synth_fam"/>
</dbReference>
<dbReference type="InterPro" id="IPR030960">
    <property type="entry name" value="DHQS/DOIS_N"/>
</dbReference>
<dbReference type="InterPro" id="IPR056179">
    <property type="entry name" value="DHQS_C"/>
</dbReference>
<dbReference type="NCBIfam" id="TIGR01357">
    <property type="entry name" value="aroB"/>
    <property type="match status" value="1"/>
</dbReference>
<dbReference type="PANTHER" id="PTHR43622">
    <property type="entry name" value="3-DEHYDROQUINATE SYNTHASE"/>
    <property type="match status" value="1"/>
</dbReference>
<dbReference type="PANTHER" id="PTHR43622:SF7">
    <property type="entry name" value="3-DEHYDROQUINATE SYNTHASE, CHLOROPLASTIC"/>
    <property type="match status" value="1"/>
</dbReference>
<dbReference type="Pfam" id="PF01761">
    <property type="entry name" value="DHQ_synthase"/>
    <property type="match status" value="1"/>
</dbReference>
<dbReference type="Pfam" id="PF24621">
    <property type="entry name" value="DHQS_C"/>
    <property type="match status" value="1"/>
</dbReference>
<dbReference type="PIRSF" id="PIRSF001455">
    <property type="entry name" value="DHQ_synth"/>
    <property type="match status" value="1"/>
</dbReference>
<dbReference type="SUPFAM" id="SSF56796">
    <property type="entry name" value="Dehydroquinate synthase-like"/>
    <property type="match status" value="1"/>
</dbReference>
<sequence>MNAPTTFADSVTVPVSLGDRSYDILIGKGLVERAGEEVAKRLKGVRVAIVTDENVAAVHLERLQASFARAGIDSTPVIVAPGEKSKSFATLETVTNAILVAKLERGDAVVALGGGVVGDLSGFVAGIVRRGMNFVQMPTSLLAQVDSSVGGKTGINTAHGKNLVGVFNQPQLVLADTQVLDTLSPREFRAGYAEVAKYGLIDRPDFFAWLEANWQEVFSGGAARTKAIAESCRSKAAVVARDERETGDRALLNLGHTFGHALESATGYDSSRLVHGEGVAIGMALAYRFSARMNLAGIEAAERVEAHLKAVGLPVSLAEVPGGLPPAEKLMDYIAQDKKVTRGTLTFILTHGIGQSFIAKDVPPAAVLEFLKERLAIA</sequence>
<evidence type="ECO:0000255" key="1">
    <source>
        <dbReference type="HAMAP-Rule" id="MF_00110"/>
    </source>
</evidence>
<name>AROB_BRUAB</name>
<protein>
    <recommendedName>
        <fullName evidence="1">3-dehydroquinate synthase</fullName>
        <shortName evidence="1">DHQS</shortName>
        <ecNumber evidence="1">4.2.3.4</ecNumber>
    </recommendedName>
</protein>
<organism>
    <name type="scientific">Brucella abortus biovar 1 (strain 9-941)</name>
    <dbReference type="NCBI Taxonomy" id="262698"/>
    <lineage>
        <taxon>Bacteria</taxon>
        <taxon>Pseudomonadati</taxon>
        <taxon>Pseudomonadota</taxon>
        <taxon>Alphaproteobacteria</taxon>
        <taxon>Hyphomicrobiales</taxon>
        <taxon>Brucellaceae</taxon>
        <taxon>Brucella/Ochrobactrum group</taxon>
        <taxon>Brucella</taxon>
    </lineage>
</organism>
<gene>
    <name evidence="1" type="primary">aroB</name>
    <name type="ordered locus">BruAb1_2003</name>
</gene>
<feature type="chain" id="PRO_0000231071" description="3-dehydroquinate synthase">
    <location>
        <begin position="1"/>
        <end position="378"/>
    </location>
</feature>
<feature type="binding site" evidence="1">
    <location>
        <begin position="115"/>
        <end position="119"/>
    </location>
    <ligand>
        <name>NAD(+)</name>
        <dbReference type="ChEBI" id="CHEBI:57540"/>
    </ligand>
</feature>
<feature type="binding site" evidence="1">
    <location>
        <begin position="139"/>
        <end position="140"/>
    </location>
    <ligand>
        <name>NAD(+)</name>
        <dbReference type="ChEBI" id="CHEBI:57540"/>
    </ligand>
</feature>
<feature type="binding site" evidence="1">
    <location>
        <position position="152"/>
    </location>
    <ligand>
        <name>NAD(+)</name>
        <dbReference type="ChEBI" id="CHEBI:57540"/>
    </ligand>
</feature>
<feature type="binding site" evidence="1">
    <location>
        <position position="161"/>
    </location>
    <ligand>
        <name>NAD(+)</name>
        <dbReference type="ChEBI" id="CHEBI:57540"/>
    </ligand>
</feature>
<feature type="binding site" evidence="1">
    <location>
        <position position="194"/>
    </location>
    <ligand>
        <name>Zn(2+)</name>
        <dbReference type="ChEBI" id="CHEBI:29105"/>
    </ligand>
</feature>
<feature type="binding site" evidence="1">
    <location>
        <position position="256"/>
    </location>
    <ligand>
        <name>Zn(2+)</name>
        <dbReference type="ChEBI" id="CHEBI:29105"/>
    </ligand>
</feature>
<feature type="binding site" evidence="1">
    <location>
        <position position="275"/>
    </location>
    <ligand>
        <name>Zn(2+)</name>
        <dbReference type="ChEBI" id="CHEBI:29105"/>
    </ligand>
</feature>
<comment type="function">
    <text evidence="1">Catalyzes the conversion of 3-deoxy-D-arabino-heptulosonate 7-phosphate (DAHP) to dehydroquinate (DHQ).</text>
</comment>
<comment type="catalytic activity">
    <reaction evidence="1">
        <text>7-phospho-2-dehydro-3-deoxy-D-arabino-heptonate = 3-dehydroquinate + phosphate</text>
        <dbReference type="Rhea" id="RHEA:21968"/>
        <dbReference type="ChEBI" id="CHEBI:32364"/>
        <dbReference type="ChEBI" id="CHEBI:43474"/>
        <dbReference type="ChEBI" id="CHEBI:58394"/>
        <dbReference type="EC" id="4.2.3.4"/>
    </reaction>
</comment>
<comment type="cofactor">
    <cofactor evidence="1">
        <name>Co(2+)</name>
        <dbReference type="ChEBI" id="CHEBI:48828"/>
    </cofactor>
    <cofactor evidence="1">
        <name>Zn(2+)</name>
        <dbReference type="ChEBI" id="CHEBI:29105"/>
    </cofactor>
    <text evidence="1">Binds 1 divalent metal cation per subunit. Can use either Co(2+) or Zn(2+).</text>
</comment>
<comment type="cofactor">
    <cofactor evidence="1">
        <name>NAD(+)</name>
        <dbReference type="ChEBI" id="CHEBI:57540"/>
    </cofactor>
</comment>
<comment type="pathway">
    <text evidence="1">Metabolic intermediate biosynthesis; chorismate biosynthesis; chorismate from D-erythrose 4-phosphate and phosphoenolpyruvate: step 2/7.</text>
</comment>
<comment type="subcellular location">
    <subcellularLocation>
        <location evidence="1">Cytoplasm</location>
    </subcellularLocation>
</comment>
<comment type="similarity">
    <text evidence="1">Belongs to the sugar phosphate cyclases superfamily. Dehydroquinate synthase family.</text>
</comment>
<reference key="1">
    <citation type="journal article" date="2005" name="J. Bacteriol.">
        <title>Completion of the genome sequence of Brucella abortus and comparison to the highly similar genomes of Brucella melitensis and Brucella suis.</title>
        <authorList>
            <person name="Halling S.M."/>
            <person name="Peterson-Burch B.D."/>
            <person name="Bricker B.J."/>
            <person name="Zuerner R.L."/>
            <person name="Qing Z."/>
            <person name="Li L.-L."/>
            <person name="Kapur V."/>
            <person name="Alt D.P."/>
            <person name="Olsen S.C."/>
        </authorList>
    </citation>
    <scope>NUCLEOTIDE SEQUENCE [LARGE SCALE GENOMIC DNA]</scope>
    <source>
        <strain>9-941</strain>
    </source>
</reference>
<accession>Q57AM9</accession>
<keyword id="KW-0028">Amino-acid biosynthesis</keyword>
<keyword id="KW-0057">Aromatic amino acid biosynthesis</keyword>
<keyword id="KW-0170">Cobalt</keyword>
<keyword id="KW-0963">Cytoplasm</keyword>
<keyword id="KW-0456">Lyase</keyword>
<keyword id="KW-0479">Metal-binding</keyword>
<keyword id="KW-0520">NAD</keyword>
<keyword id="KW-0547">Nucleotide-binding</keyword>
<keyword id="KW-0862">Zinc</keyword>